<sequence>MNLRKMTELNITGKKILIRTDLNVPIKNGVIQSDARILAALPTIEIAIEKKAKIIILSHLGRPKEGCYTKKYSLFPIFEYLKKKLKKTKIYFSDNHLKKVEINSGEILILENVRFNVGELKNDENLSKEYANLCDIFVMDAFGSAHRMQSSTYGIGKFVKIACAGPLLISEINNLKKALKNPKRPMVAIVGGAKVSTKFNVLNKLAAISDTIIVGGGIANTFLAIDNKIGKSLHEPKFILKAKKLRDKYNNIVIPIDSRVGKNFSHKEKCTIKLSSNIEKNEEIMDLGDKTIKKIIKILKKSKTILWNGPVGVFEFPNFRKGTEMIAKAIAENNGFSIAGGGDTLSVIDMFQIKDKISYISTGGGAFLEFIEGKKLPAMKMLEENFHK</sequence>
<name>PGK_BUCAP</name>
<organism>
    <name type="scientific">Buchnera aphidicola subsp. Schizaphis graminum (strain Sg)</name>
    <dbReference type="NCBI Taxonomy" id="198804"/>
    <lineage>
        <taxon>Bacteria</taxon>
        <taxon>Pseudomonadati</taxon>
        <taxon>Pseudomonadota</taxon>
        <taxon>Gammaproteobacteria</taxon>
        <taxon>Enterobacterales</taxon>
        <taxon>Erwiniaceae</taxon>
        <taxon>Buchnera</taxon>
    </lineage>
</organism>
<comment type="catalytic activity">
    <reaction evidence="1">
        <text>(2R)-3-phosphoglycerate + ATP = (2R)-3-phospho-glyceroyl phosphate + ADP</text>
        <dbReference type="Rhea" id="RHEA:14801"/>
        <dbReference type="ChEBI" id="CHEBI:30616"/>
        <dbReference type="ChEBI" id="CHEBI:57604"/>
        <dbReference type="ChEBI" id="CHEBI:58272"/>
        <dbReference type="ChEBI" id="CHEBI:456216"/>
        <dbReference type="EC" id="2.7.2.3"/>
    </reaction>
</comment>
<comment type="pathway">
    <text evidence="1">Carbohydrate degradation; glycolysis; pyruvate from D-glyceraldehyde 3-phosphate: step 2/5.</text>
</comment>
<comment type="subunit">
    <text evidence="1">Monomer.</text>
</comment>
<comment type="subcellular location">
    <subcellularLocation>
        <location evidence="1">Cytoplasm</location>
    </subcellularLocation>
</comment>
<comment type="similarity">
    <text evidence="1">Belongs to the phosphoglycerate kinase family.</text>
</comment>
<accession>Q8K9B3</accession>
<evidence type="ECO:0000255" key="1">
    <source>
        <dbReference type="HAMAP-Rule" id="MF_00145"/>
    </source>
</evidence>
<gene>
    <name evidence="1" type="primary">pgk</name>
    <name type="ordered locus">BUsg_435</name>
</gene>
<proteinExistence type="inferred from homology"/>
<reference key="1">
    <citation type="journal article" date="2002" name="Science">
        <title>50 million years of genomic stasis in endosymbiotic bacteria.</title>
        <authorList>
            <person name="Tamas I."/>
            <person name="Klasson L."/>
            <person name="Canbaeck B."/>
            <person name="Naeslund A.K."/>
            <person name="Eriksson A.-S."/>
            <person name="Wernegreen J.J."/>
            <person name="Sandstroem J.P."/>
            <person name="Moran N.A."/>
            <person name="Andersson S.G.E."/>
        </authorList>
    </citation>
    <scope>NUCLEOTIDE SEQUENCE [LARGE SCALE GENOMIC DNA]</scope>
    <source>
        <strain>Sg</strain>
    </source>
</reference>
<protein>
    <recommendedName>
        <fullName evidence="1">Phosphoglycerate kinase</fullName>
        <ecNumber evidence="1">2.7.2.3</ecNumber>
    </recommendedName>
</protein>
<keyword id="KW-0067">ATP-binding</keyword>
<keyword id="KW-0963">Cytoplasm</keyword>
<keyword id="KW-0324">Glycolysis</keyword>
<keyword id="KW-0418">Kinase</keyword>
<keyword id="KW-0547">Nucleotide-binding</keyword>
<keyword id="KW-0808">Transferase</keyword>
<feature type="chain" id="PRO_0000145919" description="Phosphoglycerate kinase">
    <location>
        <begin position="1"/>
        <end position="388"/>
    </location>
</feature>
<feature type="binding site" evidence="1">
    <location>
        <begin position="21"/>
        <end position="23"/>
    </location>
    <ligand>
        <name>substrate</name>
    </ligand>
</feature>
<feature type="binding site" evidence="1">
    <location>
        <position position="36"/>
    </location>
    <ligand>
        <name>substrate</name>
    </ligand>
</feature>
<feature type="binding site" evidence="1">
    <location>
        <begin position="59"/>
        <end position="62"/>
    </location>
    <ligand>
        <name>substrate</name>
    </ligand>
</feature>
<feature type="binding site" evidence="1">
    <location>
        <position position="114"/>
    </location>
    <ligand>
        <name>substrate</name>
    </ligand>
</feature>
<feature type="binding site" evidence="1">
    <location>
        <position position="147"/>
    </location>
    <ligand>
        <name>substrate</name>
    </ligand>
</feature>
<feature type="binding site" evidence="1">
    <location>
        <position position="198"/>
    </location>
    <ligand>
        <name>ATP</name>
        <dbReference type="ChEBI" id="CHEBI:30616"/>
    </ligand>
</feature>
<feature type="binding site" evidence="1">
    <location>
        <position position="315"/>
    </location>
    <ligand>
        <name>ATP</name>
        <dbReference type="ChEBI" id="CHEBI:30616"/>
    </ligand>
</feature>
<feature type="binding site" evidence="1">
    <location>
        <begin position="341"/>
        <end position="344"/>
    </location>
    <ligand>
        <name>ATP</name>
        <dbReference type="ChEBI" id="CHEBI:30616"/>
    </ligand>
</feature>
<dbReference type="EC" id="2.7.2.3" evidence="1"/>
<dbReference type="EMBL" id="AE013218">
    <property type="protein sequence ID" value="AAM67978.1"/>
    <property type="molecule type" value="Genomic_DNA"/>
</dbReference>
<dbReference type="RefSeq" id="WP_011053945.1">
    <property type="nucleotide sequence ID" value="NC_004061.1"/>
</dbReference>
<dbReference type="SMR" id="Q8K9B3"/>
<dbReference type="STRING" id="198804.BUsg_435"/>
<dbReference type="GeneID" id="93003907"/>
<dbReference type="KEGG" id="bas:BUsg_435"/>
<dbReference type="eggNOG" id="COG0126">
    <property type="taxonomic scope" value="Bacteria"/>
</dbReference>
<dbReference type="HOGENOM" id="CLU_025427_0_2_6"/>
<dbReference type="UniPathway" id="UPA00109">
    <property type="reaction ID" value="UER00185"/>
</dbReference>
<dbReference type="Proteomes" id="UP000000416">
    <property type="component" value="Chromosome"/>
</dbReference>
<dbReference type="GO" id="GO:0005829">
    <property type="term" value="C:cytosol"/>
    <property type="evidence" value="ECO:0007669"/>
    <property type="project" value="TreeGrafter"/>
</dbReference>
<dbReference type="GO" id="GO:0043531">
    <property type="term" value="F:ADP binding"/>
    <property type="evidence" value="ECO:0007669"/>
    <property type="project" value="TreeGrafter"/>
</dbReference>
<dbReference type="GO" id="GO:0005524">
    <property type="term" value="F:ATP binding"/>
    <property type="evidence" value="ECO:0007669"/>
    <property type="project" value="UniProtKB-KW"/>
</dbReference>
<dbReference type="GO" id="GO:0004618">
    <property type="term" value="F:phosphoglycerate kinase activity"/>
    <property type="evidence" value="ECO:0007669"/>
    <property type="project" value="UniProtKB-UniRule"/>
</dbReference>
<dbReference type="GO" id="GO:0006094">
    <property type="term" value="P:gluconeogenesis"/>
    <property type="evidence" value="ECO:0007669"/>
    <property type="project" value="TreeGrafter"/>
</dbReference>
<dbReference type="GO" id="GO:0006096">
    <property type="term" value="P:glycolytic process"/>
    <property type="evidence" value="ECO:0007669"/>
    <property type="project" value="UniProtKB-UniRule"/>
</dbReference>
<dbReference type="FunFam" id="3.40.50.1260:FF:000001">
    <property type="entry name" value="Phosphoglycerate kinase"/>
    <property type="match status" value="1"/>
</dbReference>
<dbReference type="FunFam" id="3.40.50.1260:FF:000002">
    <property type="entry name" value="Phosphoglycerate kinase"/>
    <property type="match status" value="1"/>
</dbReference>
<dbReference type="Gene3D" id="3.40.50.1260">
    <property type="entry name" value="Phosphoglycerate kinase, N-terminal domain"/>
    <property type="match status" value="2"/>
</dbReference>
<dbReference type="HAMAP" id="MF_00145">
    <property type="entry name" value="Phosphoglyc_kinase"/>
    <property type="match status" value="1"/>
</dbReference>
<dbReference type="InterPro" id="IPR001576">
    <property type="entry name" value="Phosphoglycerate_kinase"/>
</dbReference>
<dbReference type="InterPro" id="IPR015824">
    <property type="entry name" value="Phosphoglycerate_kinase_N"/>
</dbReference>
<dbReference type="InterPro" id="IPR036043">
    <property type="entry name" value="Phosphoglycerate_kinase_sf"/>
</dbReference>
<dbReference type="PANTHER" id="PTHR11406">
    <property type="entry name" value="PHOSPHOGLYCERATE KINASE"/>
    <property type="match status" value="1"/>
</dbReference>
<dbReference type="PANTHER" id="PTHR11406:SF23">
    <property type="entry name" value="PHOSPHOGLYCERATE KINASE 1, CHLOROPLASTIC-RELATED"/>
    <property type="match status" value="1"/>
</dbReference>
<dbReference type="Pfam" id="PF00162">
    <property type="entry name" value="PGK"/>
    <property type="match status" value="1"/>
</dbReference>
<dbReference type="PIRSF" id="PIRSF000724">
    <property type="entry name" value="Pgk"/>
    <property type="match status" value="1"/>
</dbReference>
<dbReference type="PRINTS" id="PR00477">
    <property type="entry name" value="PHGLYCKINASE"/>
</dbReference>
<dbReference type="SUPFAM" id="SSF53748">
    <property type="entry name" value="Phosphoglycerate kinase"/>
    <property type="match status" value="1"/>
</dbReference>